<accession>Q2HR73</accession>
<accession>D0UZS2</accession>
<sequence length="911" mass="97956">MPKAGGSEWATLWIIDALENNKFPYFSWFDRNNLLFAAPAPLPAGSDIPPGWYSVYHAFDEECDRVYGPSPVVGQTVYGRFGRLLRGTRRAVVRNDLRYSDTFGGSYVVWQLVRTPFKNCTYCYGAAYGPEKLQRFIQCLLSPPMQTTATRRSDTREQSYEEAGAAAPAPPKAPSGLRGRPRKSNRYYNVGDITTEQKAACSVWIPVNEGASTSGMGSSGTRQVTQASSFTWRVPGDPPAPSTLTGPSDPHSSGAGLPGTAPPKPQHETRLAGTVSGVSGVAQTPGDTGQLAPPMRDGSRLPSTSPWIPACFPWGDLPVTGWWPQGASGLPEKVHPPTTGQFDPLSPRWTYTGIPSSQLNPAAPSWIPPHAQAGTFVGEFSQGAPLAPQGLLPQSGQCASAWLPRRETGAEGACGASTEGRAPQGAASERVYPFEPQPPSAPAPGYAKPSCYNWSPLAEPPATRPIRAPVWHPPVGHAVVPEVRTPLWIPWSSGGAPNQGLSHTQGGASATPSAGAPPTPEVAERQEPSSSGIPYVCQGDNMATGYRRVTTSSGALEVEIIDLTGDSDTPSTTVASTPLPVSGPRVFQPTVLYSAPEPAVNPEVSHLPTELERRECVCPGSGERPRVPLVSTYAGDRYAVGGYGPEQSLVPPPLGLPLTLSNLQGEDICTWEEGLGNILSELQEEPSSSTRQATDRRRPRSRSPHGRRTPVSHSGPEKPPSKMFFDPPDSQRVSFVVEIFVYGNLRGTLRREGDAGEAMLCSWPVGDTLGHLCQSFVPELLRIPRLTVPSPEQMEILNRVFEGLGHGFPIFCSMSGIYSRNATQVEGWWFGNPNSRYERILRSFSPRVPQQLFNTARYLATTAAIPQTPLSVNPVTCGTVFFGASPASTENFQNVPLTVKIFIGSIWDSLH</sequence>
<feature type="chain" id="PRO_0000423775" description="Viral IRF4-like protein">
    <location>
        <begin position="1"/>
        <end position="911"/>
    </location>
</feature>
<feature type="DNA-binding region" description="IRF tryptophan pentad repeat" evidence="1">
    <location>
        <begin position="7"/>
        <end position="114"/>
    </location>
</feature>
<feature type="region of interest" description="Disordered" evidence="2">
    <location>
        <begin position="147"/>
        <end position="184"/>
    </location>
</feature>
<feature type="region of interest" description="Disordered" evidence="2">
    <location>
        <begin position="211"/>
        <end position="302"/>
    </location>
</feature>
<feature type="region of interest" description="Disordered" evidence="2">
    <location>
        <begin position="494"/>
        <end position="537"/>
    </location>
</feature>
<feature type="region of interest" description="Disordered" evidence="2">
    <location>
        <begin position="681"/>
        <end position="727"/>
    </location>
</feature>
<feature type="compositionally biased region" description="Low complexity" evidence="2">
    <location>
        <begin position="211"/>
        <end position="221"/>
    </location>
</feature>
<feature type="compositionally biased region" description="Polar residues" evidence="2">
    <location>
        <begin position="222"/>
        <end position="231"/>
    </location>
</feature>
<feature type="compositionally biased region" description="Polar residues" evidence="2">
    <location>
        <begin position="495"/>
        <end position="505"/>
    </location>
</feature>
<feature type="compositionally biased region" description="Basic residues" evidence="2">
    <location>
        <begin position="697"/>
        <end position="710"/>
    </location>
</feature>
<feature type="turn" evidence="6">
    <location>
        <begin position="207"/>
        <end position="210"/>
    </location>
</feature>
<name>VIRF4_HHV8P</name>
<comment type="function">
    <text evidence="3 4 5">Plays a role in host cell apoptosis modulation by promoting TP53/p53 ubiquitination and subsequent degradation and thus down-regulating TP53/p53-mediated apoptosis (PubMed:19369353). Works as a potential viral transcription factor to modulate host gene expression to build favorable environments for the viral lytic life cycle and greatly accelerates the induction of an immediate early gene RTA, early genes ORF36 and ORF57, late genes ORF25 and ORF64, and latent genes LANA1 and v-IRF3 (PubMed:24335298). Inhibits host interferon-alpha production by interacting with host IRF7 and preventing IRF7 dimerization (PubMed:28342865).</text>
</comment>
<comment type="subunit">
    <text evidence="3 5">Interacts with host MDM2; this interaction facilitates the proteasomal degradation of TP53/p53 (PubMed:19369353). Interacts with host IRF7; this interaction prevents IRF7 dimerization and subsequent activation (PubMed:28342865).</text>
</comment>
<comment type="interaction">
    <interactant intactId="EBI-9001898">
        <id>Q2HR73</id>
    </interactant>
    <interactant intactId="EBI-389668">
        <id>Q00987</id>
        <label>MDM2</label>
    </interactant>
    <organismsDiffer>true</organismsDiffer>
    <experiments>2</experiments>
</comment>
<comment type="subcellular location">
    <subcellularLocation>
        <location>Host nucleus</location>
    </subcellularLocation>
</comment>
<comment type="similarity">
    <text evidence="1">Belongs to the IRF family.</text>
</comment>
<protein>
    <recommendedName>
        <fullName>Viral IRF4-like protein</fullName>
        <shortName>vIRF-4</shortName>
    </recommendedName>
</protein>
<reference key="1">
    <citation type="journal article" date="1999" name="J. Virol.">
        <title>Identification of a spliced gene from Kaposi's sarcoma-associated herpesvirus encoding a protein with similarities to latent membrane proteins 1 and 2A of Epstein-Barr virus.</title>
        <authorList>
            <person name="Glenn M."/>
            <person name="Rainbow L."/>
            <person name="Aurade F."/>
            <person name="Davison A."/>
            <person name="Schulz T.F."/>
        </authorList>
    </citation>
    <scope>NUCLEOTIDE SEQUENCE [LARGE SCALE GENOMIC DNA]</scope>
</reference>
<reference key="2">
    <citation type="journal article" date="2006" name="J. Gen. Virol.">
        <title>Kaposi's sarcoma-associated herpesvirus immune modulation: an overview.</title>
        <authorList>
            <person name="Rezaee S.A.R."/>
            <person name="Cunningham C."/>
            <person name="Davison A.J."/>
            <person name="Blackbourn D.J."/>
        </authorList>
    </citation>
    <scope>NUCLEOTIDE SEQUENCE [LARGE SCALE GENOMIC DNA]</scope>
</reference>
<reference key="3">
    <citation type="journal article" date="2009" name="J. Virol.">
        <title>Kaposi's sarcoma-associated herpesvirus viral interferon regulatory factor 4 targets MDM2 to deregulate the p53 tumor suppressor pathway.</title>
        <authorList>
            <person name="Lee H.R."/>
            <person name="Toth Z."/>
            <person name="Shin Y.C."/>
            <person name="Lee J.S."/>
            <person name="Chang H."/>
            <person name="Gu W."/>
            <person name="Oh T.K."/>
            <person name="Kim M.H."/>
            <person name="Jung J.U."/>
        </authorList>
    </citation>
    <scope>FUNCTION</scope>
    <scope>INTERACTION WITH HOST MDM2</scope>
</reference>
<reference key="4">
    <citation type="journal article" date="2014" name="J. Virol.">
        <title>Kaposi's sarcoma-associated herpesvirus viral interferon regulatory factor 4 (vIRF4) targets expression of cellular IRF4 and the Myc gene to facilitate lytic replication.</title>
        <authorList>
            <person name="Lee H.R."/>
            <person name="Doganay S."/>
            <person name="Chung B."/>
            <person name="Toth Z."/>
            <person name="Brulois K."/>
            <person name="Lee S."/>
            <person name="Kanketayeva Z."/>
            <person name="Feng P."/>
            <person name="Ha T."/>
            <person name="Jung J.U."/>
        </authorList>
    </citation>
    <scope>FUNCTION</scope>
</reference>
<reference key="5">
    <citation type="journal article" date="2017" name="Biochem. Biophys. Res. Commun.">
        <title>KSHV-encoded viral interferon regulatory factor 4 (vIRF4) interacts with IRF7 and inhibits interferon alpha production.</title>
        <authorList>
            <person name="Hwang S.W."/>
            <person name="Kim D."/>
            <person name="Jung J.U."/>
            <person name="Lee H.R."/>
        </authorList>
    </citation>
    <scope>FUNCTION</scope>
    <scope>INTERACTION WITH HOST IRF7</scope>
</reference>
<reference key="6">
    <citation type="journal article" date="2011" name="Nat. Struct. Mol. Biol.">
        <title>Bilateral inhibition of HAUSP deubiquitinase by a viral interferon regulatory factor protein.</title>
        <authorList>
            <person name="Lee H.R."/>
            <person name="Choi W.C."/>
            <person name="Lee S."/>
            <person name="Hwang J."/>
            <person name="Hwang E."/>
            <person name="Guchhait K."/>
            <person name="Haas J."/>
            <person name="Toth Z."/>
            <person name="Jeon Y.H."/>
            <person name="Oh T.K."/>
            <person name="Kim M.H."/>
            <person name="Jung J.U."/>
        </authorList>
    </citation>
    <scope>X-RAY CRYSTALLOGRAPHY (1.60 ANGSTROMS) OF 202-216</scope>
</reference>
<gene>
    <name type="primary">vIRF-4</name>
</gene>
<keyword id="KW-0002">3D-structure</keyword>
<keyword id="KW-0238">DNA-binding</keyword>
<keyword id="KW-1048">Host nucleus</keyword>
<keyword id="KW-0945">Host-virus interaction</keyword>
<keyword id="KW-1090">Inhibition of host innate immune response by virus</keyword>
<keyword id="KW-1093">Inhibition of host IRF7 by virus</keyword>
<keyword id="KW-1113">Inhibition of host RLR pathway by virus</keyword>
<keyword id="KW-1185">Reference proteome</keyword>
<keyword id="KW-0804">Transcription</keyword>
<keyword id="KW-0805">Transcription regulation</keyword>
<keyword id="KW-0899">Viral immunoevasion</keyword>
<organismHost>
    <name type="scientific">Homo sapiens</name>
    <name type="common">Human</name>
    <dbReference type="NCBI Taxonomy" id="9606"/>
</organismHost>
<dbReference type="EMBL" id="AF148805">
    <property type="protein sequence ID" value="ABD28910.1"/>
    <property type="molecule type" value="Genomic_DNA"/>
</dbReference>
<dbReference type="RefSeq" id="YP_001129412.1">
    <property type="nucleotide sequence ID" value="NC_009333.1"/>
</dbReference>
<dbReference type="PDB" id="2XXN">
    <property type="method" value="X-ray"/>
    <property type="resolution" value="1.60 A"/>
    <property type="chains" value="B=202-216"/>
</dbReference>
<dbReference type="PDBsum" id="2XXN"/>
<dbReference type="SMR" id="Q2HR73"/>
<dbReference type="BioGRID" id="1776998">
    <property type="interactions" value="33"/>
</dbReference>
<dbReference type="IntAct" id="Q2HR73">
    <property type="interactions" value="1"/>
</dbReference>
<dbReference type="DNASU" id="4961495"/>
<dbReference type="GeneID" id="4961495"/>
<dbReference type="KEGG" id="vg:4961495"/>
<dbReference type="Proteomes" id="UP000000942">
    <property type="component" value="Segment"/>
</dbReference>
<dbReference type="GO" id="GO:0042025">
    <property type="term" value="C:host cell nucleus"/>
    <property type="evidence" value="ECO:0007669"/>
    <property type="project" value="UniProtKB-SubCell"/>
</dbReference>
<dbReference type="GO" id="GO:0000976">
    <property type="term" value="F:transcription cis-regulatory region binding"/>
    <property type="evidence" value="ECO:0007669"/>
    <property type="project" value="InterPro"/>
</dbReference>
<dbReference type="GO" id="GO:0039557">
    <property type="term" value="P:symbiont-mediated suppression of host cytoplasmic pattern recognition receptor signaling pathway via inhibition of IRF7 activity"/>
    <property type="evidence" value="ECO:0007669"/>
    <property type="project" value="UniProtKB-KW"/>
</dbReference>
<dbReference type="Gene3D" id="1.10.10.10">
    <property type="entry name" value="Winged helix-like DNA-binding domain superfamily/Winged helix DNA-binding domain"/>
    <property type="match status" value="1"/>
</dbReference>
<dbReference type="InterPro" id="IPR001346">
    <property type="entry name" value="Interferon_reg_fact_DNA-bd_dom"/>
</dbReference>
<dbReference type="InterPro" id="IPR036388">
    <property type="entry name" value="WH-like_DNA-bd_sf"/>
</dbReference>
<dbReference type="PROSITE" id="PS51507">
    <property type="entry name" value="IRF_2"/>
    <property type="match status" value="1"/>
</dbReference>
<proteinExistence type="evidence at protein level"/>
<evidence type="ECO:0000255" key="1">
    <source>
        <dbReference type="PROSITE-ProRule" id="PRU00840"/>
    </source>
</evidence>
<evidence type="ECO:0000256" key="2">
    <source>
        <dbReference type="SAM" id="MobiDB-lite"/>
    </source>
</evidence>
<evidence type="ECO:0000269" key="3">
    <source>
    </source>
</evidence>
<evidence type="ECO:0000269" key="4">
    <source>
    </source>
</evidence>
<evidence type="ECO:0000269" key="5">
    <source>
    </source>
</evidence>
<evidence type="ECO:0007829" key="6">
    <source>
        <dbReference type="PDB" id="2XXN"/>
    </source>
</evidence>
<organism>
    <name type="scientific">Human herpesvirus 8 type P (isolate GK18)</name>
    <name type="common">HHV-8</name>
    <name type="synonym">Kaposi's sarcoma-associated herpesvirus</name>
    <dbReference type="NCBI Taxonomy" id="868565"/>
    <lineage>
        <taxon>Viruses</taxon>
        <taxon>Duplodnaviria</taxon>
        <taxon>Heunggongvirae</taxon>
        <taxon>Peploviricota</taxon>
        <taxon>Herviviricetes</taxon>
        <taxon>Herpesvirales</taxon>
        <taxon>Orthoherpesviridae</taxon>
        <taxon>Gammaherpesvirinae</taxon>
        <taxon>Rhadinovirus</taxon>
        <taxon>Rhadinovirus humangamma8</taxon>
        <taxon>Human herpesvirus 8</taxon>
    </lineage>
</organism>